<comment type="subcellular location">
    <subcellularLocation>
        <location evidence="2">Membrane</location>
        <topology evidence="2">Multi-pass membrane protein</topology>
    </subcellularLocation>
</comment>
<comment type="similarity">
    <text evidence="2">Belongs to the major facilitator superfamily.</text>
</comment>
<reference key="1">
    <citation type="journal article" date="2004" name="Genome Res.">
        <title>The status, quality, and expansion of the NIH full-length cDNA project: the Mammalian Gene Collection (MGC).</title>
        <authorList>
            <consortium name="The MGC Project Team"/>
        </authorList>
    </citation>
    <scope>NUCLEOTIDE SEQUENCE [LARGE SCALE MRNA]</scope>
    <source>
        <tissue>Testis</tissue>
    </source>
</reference>
<feature type="chain" id="PRO_0000273394" description="Major facilitator superfamily domain-containing protein 3">
    <location>
        <begin position="1"/>
        <end position="416"/>
    </location>
</feature>
<feature type="transmembrane region" description="Helical" evidence="1">
    <location>
        <begin position="10"/>
        <end position="30"/>
    </location>
</feature>
<feature type="transmembrane region" description="Helical" evidence="1">
    <location>
        <begin position="40"/>
        <end position="60"/>
    </location>
</feature>
<feature type="transmembrane region" description="Helical" evidence="1">
    <location>
        <begin position="68"/>
        <end position="88"/>
    </location>
</feature>
<feature type="transmembrane region" description="Helical" evidence="1">
    <location>
        <begin position="99"/>
        <end position="119"/>
    </location>
</feature>
<feature type="transmembrane region" description="Helical" evidence="1">
    <location>
        <begin position="139"/>
        <end position="158"/>
    </location>
</feature>
<feature type="transmembrane region" description="Helical" evidence="1">
    <location>
        <begin position="170"/>
        <end position="190"/>
    </location>
</feature>
<feature type="transmembrane region" description="Helical" evidence="1">
    <location>
        <begin position="204"/>
        <end position="224"/>
    </location>
</feature>
<feature type="transmembrane region" description="Helical" evidence="1">
    <location>
        <begin position="252"/>
        <end position="272"/>
    </location>
</feature>
<feature type="transmembrane region" description="Helical" evidence="1">
    <location>
        <begin position="295"/>
        <end position="315"/>
    </location>
</feature>
<feature type="transmembrane region" description="Helical" evidence="1">
    <location>
        <begin position="324"/>
        <end position="344"/>
    </location>
</feature>
<feature type="transmembrane region" description="Helical" evidence="1">
    <location>
        <begin position="365"/>
        <end position="385"/>
    </location>
</feature>
<feature type="transmembrane region" description="Helical" evidence="1">
    <location>
        <begin position="392"/>
        <end position="412"/>
    </location>
</feature>
<dbReference type="EMBL" id="BC097424">
    <property type="protein sequence ID" value="AAH97424.1"/>
    <property type="molecule type" value="mRNA"/>
</dbReference>
<dbReference type="RefSeq" id="NP_001020079.1">
    <property type="nucleotide sequence ID" value="NM_001024908.1"/>
</dbReference>
<dbReference type="SMR" id="Q4V8E5"/>
<dbReference type="FunCoup" id="Q4V8E5">
    <property type="interactions" value="25"/>
</dbReference>
<dbReference type="STRING" id="10116.ENSRNOP00000021208"/>
<dbReference type="TCDB" id="2.A.1.57.6">
    <property type="family name" value="the major facilitator superfamily (mfs)"/>
</dbReference>
<dbReference type="PhosphoSitePlus" id="Q4V8E5"/>
<dbReference type="PaxDb" id="10116-ENSRNOP00000021208"/>
<dbReference type="Ensembl" id="ENSRNOT00000021208.6">
    <property type="protein sequence ID" value="ENSRNOP00000021208.3"/>
    <property type="gene ID" value="ENSRNOG00000015685.6"/>
</dbReference>
<dbReference type="GeneID" id="500899"/>
<dbReference type="KEGG" id="rno:500899"/>
<dbReference type="UCSC" id="RGD:1560274">
    <property type="organism name" value="rat"/>
</dbReference>
<dbReference type="AGR" id="RGD:1560274"/>
<dbReference type="CTD" id="113655"/>
<dbReference type="RGD" id="1560274">
    <property type="gene designation" value="Mfsd3"/>
</dbReference>
<dbReference type="eggNOG" id="KOG3574">
    <property type="taxonomic scope" value="Eukaryota"/>
</dbReference>
<dbReference type="GeneTree" id="ENSGT00940000154019"/>
<dbReference type="HOGENOM" id="CLU_029352_2_1_1"/>
<dbReference type="InParanoid" id="Q4V8E5"/>
<dbReference type="OMA" id="PFYVDMG"/>
<dbReference type="OrthoDB" id="6415790at2759"/>
<dbReference type="PhylomeDB" id="Q4V8E5"/>
<dbReference type="TreeFam" id="TF330933"/>
<dbReference type="PRO" id="PR:Q4V8E5"/>
<dbReference type="Proteomes" id="UP000002494">
    <property type="component" value="Chromosome 7"/>
</dbReference>
<dbReference type="Bgee" id="ENSRNOG00000015685">
    <property type="expression patterns" value="Expressed in skeletal muscle tissue and 19 other cell types or tissues"/>
</dbReference>
<dbReference type="GO" id="GO:0016020">
    <property type="term" value="C:membrane"/>
    <property type="evidence" value="ECO:0007669"/>
    <property type="project" value="UniProtKB-SubCell"/>
</dbReference>
<dbReference type="GO" id="GO:0022857">
    <property type="term" value="F:transmembrane transporter activity"/>
    <property type="evidence" value="ECO:0007669"/>
    <property type="project" value="InterPro"/>
</dbReference>
<dbReference type="CDD" id="cd17485">
    <property type="entry name" value="MFS_MFSD3"/>
    <property type="match status" value="1"/>
</dbReference>
<dbReference type="FunFam" id="1.20.1250.20:FF:000176">
    <property type="entry name" value="Major facilitator superfamily domain containing 3"/>
    <property type="match status" value="1"/>
</dbReference>
<dbReference type="Gene3D" id="1.20.1250.20">
    <property type="entry name" value="MFS general substrate transporter like domains"/>
    <property type="match status" value="1"/>
</dbReference>
<dbReference type="InterPro" id="IPR004752">
    <property type="entry name" value="AmpG_permease/AT-1"/>
</dbReference>
<dbReference type="InterPro" id="IPR011701">
    <property type="entry name" value="MFS"/>
</dbReference>
<dbReference type="InterPro" id="IPR036259">
    <property type="entry name" value="MFS_trans_sf"/>
</dbReference>
<dbReference type="PANTHER" id="PTHR12778:SF10">
    <property type="entry name" value="MAJOR FACILITATOR SUPERFAMILY DOMAIN-CONTAINING PROTEIN 3"/>
    <property type="match status" value="1"/>
</dbReference>
<dbReference type="PANTHER" id="PTHR12778">
    <property type="entry name" value="SOLUTE CARRIER FAMILY 33 ACETYL-COA TRANSPORTER -RELATED"/>
    <property type="match status" value="1"/>
</dbReference>
<dbReference type="Pfam" id="PF07690">
    <property type="entry name" value="MFS_1"/>
    <property type="match status" value="1"/>
</dbReference>
<dbReference type="SUPFAM" id="SSF103473">
    <property type="entry name" value="MFS general substrate transporter"/>
    <property type="match status" value="1"/>
</dbReference>
<sequence>MHGKLLPLAGLYLVQGLPYGLQSSLLPILLRARGLSLTRVGLTKGLYAPWLLKLAWAPLVDRRGTPRVWLTFSTVCLGLVCGLLAVLPPPQAGQTGLPTTVMGLLLLLNLGAAVQDVALDTLAVQLLEPKELGPGNTVQVVAYKLGSALAGGGLLVFFPTLSWPLLFLLLTATYWLAAALAWAAPALGRLSRPQVSEHTPHTSYLLQDLLAVPGTLWTAGFVLTYKMGEQGAGSLFPLLLLDHGASASDLGLWSGLGAATCSIAGSSLGGALLARHCSHPRQPLKLLRSVLQLRLGGLACQTALLLHLNTPGASLDPGTVMRGAALLSLCLQQFLGGVVTTATFTVMMHCSQLAPRALQATHYSFLATLELLGKLLPGTLAGVLADGLGPRLCFAAFLVLSALPVLDLRLAPSNLT</sequence>
<proteinExistence type="evidence at transcript level"/>
<evidence type="ECO:0000255" key="1"/>
<evidence type="ECO:0000305" key="2"/>
<organism>
    <name type="scientific">Rattus norvegicus</name>
    <name type="common">Rat</name>
    <dbReference type="NCBI Taxonomy" id="10116"/>
    <lineage>
        <taxon>Eukaryota</taxon>
        <taxon>Metazoa</taxon>
        <taxon>Chordata</taxon>
        <taxon>Craniata</taxon>
        <taxon>Vertebrata</taxon>
        <taxon>Euteleostomi</taxon>
        <taxon>Mammalia</taxon>
        <taxon>Eutheria</taxon>
        <taxon>Euarchontoglires</taxon>
        <taxon>Glires</taxon>
        <taxon>Rodentia</taxon>
        <taxon>Myomorpha</taxon>
        <taxon>Muroidea</taxon>
        <taxon>Muridae</taxon>
        <taxon>Murinae</taxon>
        <taxon>Rattus</taxon>
    </lineage>
</organism>
<keyword id="KW-0472">Membrane</keyword>
<keyword id="KW-1185">Reference proteome</keyword>
<keyword id="KW-0812">Transmembrane</keyword>
<keyword id="KW-1133">Transmembrane helix</keyword>
<keyword id="KW-0813">Transport</keyword>
<accession>Q4V8E5</accession>
<gene>
    <name type="primary">Mfsd3</name>
</gene>
<protein>
    <recommendedName>
        <fullName>Major facilitator superfamily domain-containing protein 3</fullName>
    </recommendedName>
</protein>
<name>MFSD3_RAT</name>